<dbReference type="EMBL" id="AY522331">
    <property type="protein sequence ID" value="AAS46194.1"/>
    <property type="status" value="ALT_INIT"/>
    <property type="molecule type" value="Genomic_DNA"/>
</dbReference>
<dbReference type="RefSeq" id="YP_009305320.1">
    <property type="nucleotide sequence ID" value="NC_031333.1"/>
</dbReference>
<dbReference type="SMR" id="P0C399"/>
<dbReference type="GeneID" id="29141386"/>
<dbReference type="GO" id="GO:0009535">
    <property type="term" value="C:chloroplast thylakoid membrane"/>
    <property type="evidence" value="ECO:0007669"/>
    <property type="project" value="UniProtKB-SubCell"/>
</dbReference>
<dbReference type="GO" id="GO:0009539">
    <property type="term" value="C:photosystem II reaction center"/>
    <property type="evidence" value="ECO:0007669"/>
    <property type="project" value="InterPro"/>
</dbReference>
<dbReference type="GO" id="GO:0009536">
    <property type="term" value="C:plastid"/>
    <property type="evidence" value="ECO:0000305"/>
    <property type="project" value="Gramene"/>
</dbReference>
<dbReference type="GO" id="GO:0009055">
    <property type="term" value="F:electron transfer activity"/>
    <property type="evidence" value="ECO:0007669"/>
    <property type="project" value="UniProtKB-UniRule"/>
</dbReference>
<dbReference type="GO" id="GO:0020037">
    <property type="term" value="F:heme binding"/>
    <property type="evidence" value="ECO:0007669"/>
    <property type="project" value="InterPro"/>
</dbReference>
<dbReference type="GO" id="GO:0005506">
    <property type="term" value="F:iron ion binding"/>
    <property type="evidence" value="ECO:0007669"/>
    <property type="project" value="UniProtKB-UniRule"/>
</dbReference>
<dbReference type="GO" id="GO:0009767">
    <property type="term" value="P:photosynthetic electron transport chain"/>
    <property type="evidence" value="ECO:0007669"/>
    <property type="project" value="InterPro"/>
</dbReference>
<dbReference type="HAMAP" id="MF_00643">
    <property type="entry name" value="PSII_PsbF"/>
    <property type="match status" value="1"/>
</dbReference>
<dbReference type="InterPro" id="IPR006241">
    <property type="entry name" value="PSII_cyt_b559_bsu"/>
</dbReference>
<dbReference type="InterPro" id="IPR006216">
    <property type="entry name" value="PSII_cyt_b559_CS"/>
</dbReference>
<dbReference type="InterPro" id="IPR013081">
    <property type="entry name" value="PSII_cyt_b559_N"/>
</dbReference>
<dbReference type="NCBIfam" id="TIGR01333">
    <property type="entry name" value="cyt_b559_beta"/>
    <property type="match status" value="1"/>
</dbReference>
<dbReference type="Pfam" id="PF00283">
    <property type="entry name" value="Cytochrom_B559"/>
    <property type="match status" value="1"/>
</dbReference>
<dbReference type="PIRSF" id="PIRSF000037">
    <property type="entry name" value="PsbF"/>
    <property type="match status" value="1"/>
</dbReference>
<dbReference type="SUPFAM" id="SSF161045">
    <property type="entry name" value="Cytochrome b559 subunits"/>
    <property type="match status" value="1"/>
</dbReference>
<dbReference type="PROSITE" id="PS00537">
    <property type="entry name" value="CYTOCHROME_B559"/>
    <property type="match status" value="1"/>
</dbReference>
<keyword id="KW-0150">Chloroplast</keyword>
<keyword id="KW-0249">Electron transport</keyword>
<keyword id="KW-0349">Heme</keyword>
<keyword id="KW-0408">Iron</keyword>
<keyword id="KW-0472">Membrane</keyword>
<keyword id="KW-0479">Metal-binding</keyword>
<keyword id="KW-0602">Photosynthesis</keyword>
<keyword id="KW-0604">Photosystem II</keyword>
<keyword id="KW-0934">Plastid</keyword>
<keyword id="KW-0793">Thylakoid</keyword>
<keyword id="KW-0812">Transmembrane</keyword>
<keyword id="KW-1133">Transmembrane helix</keyword>
<keyword id="KW-0813">Transport</keyword>
<sequence length="39" mass="4484">MTIDRTYPIFTVRWLAVHGLAVPTVFFLGSISAMQFIQR</sequence>
<geneLocation type="chloroplast"/>
<feature type="chain" id="PRO_0000200434" description="Cytochrome b559 subunit beta">
    <location>
        <begin position="1"/>
        <end position="39"/>
    </location>
</feature>
<feature type="transmembrane region" description="Helical" evidence="1">
    <location>
        <begin position="14"/>
        <end position="30"/>
    </location>
</feature>
<feature type="binding site" description="axial binding residue" evidence="1">
    <location>
        <position position="18"/>
    </location>
    <ligand>
        <name>heme</name>
        <dbReference type="ChEBI" id="CHEBI:30413"/>
        <note>ligand shared with alpha subunit</note>
    </ligand>
    <ligandPart>
        <name>Fe</name>
        <dbReference type="ChEBI" id="CHEBI:18248"/>
    </ligandPart>
</feature>
<gene>
    <name evidence="1" type="primary">psbF</name>
    <name type="ORF">PA078</name>
</gene>
<accession>P0C399</accession>
<accession>P12088</accession>
<accession>P69522</accession>
<accession>Q6QY00</accession>
<accession>Q6QY64</accession>
<protein>
    <recommendedName>
        <fullName evidence="1">Cytochrome b559 subunit beta</fullName>
    </recommendedName>
    <alternativeName>
        <fullName evidence="1">PSII reaction center subunit VI</fullName>
    </alternativeName>
</protein>
<comment type="function">
    <text evidence="1">This b-type cytochrome is tightly associated with the reaction center of photosystem II (PSII). PSII is a light-driven water:plastoquinone oxidoreductase that uses light energy to abstract electrons from H(2)O, generating O(2) and a proton gradient subsequently used for ATP formation. It consists of a core antenna complex that captures photons, and an electron transfer chain that converts photonic excitation into a charge separation.</text>
</comment>
<comment type="cofactor">
    <cofactor evidence="1">
        <name>heme b</name>
        <dbReference type="ChEBI" id="CHEBI:60344"/>
    </cofactor>
    <text evidence="1">With its partner (PsbE) binds heme. PSII binds additional chlorophylls, carotenoids and specific lipids.</text>
</comment>
<comment type="subunit">
    <text evidence="1">Heterodimer of an alpha subunit and a beta subunit. PSII is composed of 1 copy each of membrane proteins PsbA, PsbB, PsbC, PsbD, PsbE, PsbF, PsbH, PsbI, PsbJ, PsbK, PsbL, PsbM, PsbT, PsbX, PsbY, PsbZ, Psb30/Ycf12, at least 3 peripheral proteins of the oxygen-evolving complex and a large number of cofactors. It forms dimeric complexes.</text>
</comment>
<comment type="subcellular location">
    <subcellularLocation>
        <location evidence="1">Plastid</location>
        <location evidence="1">Chloroplast thylakoid membrane</location>
        <topology evidence="1">Single-pass membrane protein</topology>
    </subcellularLocation>
</comment>
<comment type="similarity">
    <text evidence="1">Belongs to the PsbE/PsbF family.</text>
</comment>
<comment type="sequence caution" evidence="2">
    <conflict type="erroneous initiation">
        <sequence resource="EMBL-CDS" id="AAS46194"/>
    </conflict>
    <text>Extended N-terminus.</text>
</comment>
<proteinExistence type="inferred from homology"/>
<evidence type="ECO:0000255" key="1">
    <source>
        <dbReference type="HAMAP-Rule" id="MF_00643"/>
    </source>
</evidence>
<evidence type="ECO:0000305" key="2"/>
<reference key="1">
    <citation type="journal article" date="2004" name="Plant Physiol.">
        <title>A comparison of rice chloroplast genomes.</title>
        <authorList>
            <person name="Tang J."/>
            <person name="Xia H."/>
            <person name="Cao M."/>
            <person name="Zhang X."/>
            <person name="Zeng W."/>
            <person name="Hu S."/>
            <person name="Tong W."/>
            <person name="Wang J."/>
            <person name="Wang J."/>
            <person name="Yu J."/>
            <person name="Yang H."/>
            <person name="Zhu L."/>
        </authorList>
    </citation>
    <scope>NUCLEOTIDE SEQUENCE [LARGE SCALE GENOMIC DNA]</scope>
    <source>
        <strain>cv. PA64s</strain>
    </source>
</reference>
<organism>
    <name type="scientific">Oryza sativa</name>
    <name type="common">Rice</name>
    <dbReference type="NCBI Taxonomy" id="4530"/>
    <lineage>
        <taxon>Eukaryota</taxon>
        <taxon>Viridiplantae</taxon>
        <taxon>Streptophyta</taxon>
        <taxon>Embryophyta</taxon>
        <taxon>Tracheophyta</taxon>
        <taxon>Spermatophyta</taxon>
        <taxon>Magnoliopsida</taxon>
        <taxon>Liliopsida</taxon>
        <taxon>Poales</taxon>
        <taxon>Poaceae</taxon>
        <taxon>BOP clade</taxon>
        <taxon>Oryzoideae</taxon>
        <taxon>Oryzeae</taxon>
        <taxon>Oryzinae</taxon>
        <taxon>Oryza</taxon>
    </lineage>
</organism>
<name>PSBF_ORYSA</name>